<dbReference type="EC" id="2.8.1.13" evidence="1"/>
<dbReference type="EMBL" id="CP000056">
    <property type="protein sequence ID" value="AAX72982.1"/>
    <property type="status" value="ALT_INIT"/>
    <property type="molecule type" value="Genomic_DNA"/>
</dbReference>
<dbReference type="RefSeq" id="WP_021340719.1">
    <property type="nucleotide sequence ID" value="NC_007296.2"/>
</dbReference>
<dbReference type="SMR" id="Q48QM8"/>
<dbReference type="KEGG" id="spb:M28_Spy1872"/>
<dbReference type="HOGENOM" id="CLU_035188_1_0_9"/>
<dbReference type="GO" id="GO:0005737">
    <property type="term" value="C:cytoplasm"/>
    <property type="evidence" value="ECO:0007669"/>
    <property type="project" value="UniProtKB-SubCell"/>
</dbReference>
<dbReference type="GO" id="GO:0005524">
    <property type="term" value="F:ATP binding"/>
    <property type="evidence" value="ECO:0007669"/>
    <property type="project" value="UniProtKB-KW"/>
</dbReference>
<dbReference type="GO" id="GO:0000049">
    <property type="term" value="F:tRNA binding"/>
    <property type="evidence" value="ECO:0007669"/>
    <property type="project" value="UniProtKB-KW"/>
</dbReference>
<dbReference type="GO" id="GO:0103016">
    <property type="term" value="F:tRNA-uridine 2-sulfurtransferase activity"/>
    <property type="evidence" value="ECO:0007669"/>
    <property type="project" value="UniProtKB-EC"/>
</dbReference>
<dbReference type="GO" id="GO:0002143">
    <property type="term" value="P:tRNA wobble position uridine thiolation"/>
    <property type="evidence" value="ECO:0007669"/>
    <property type="project" value="TreeGrafter"/>
</dbReference>
<dbReference type="CDD" id="cd01998">
    <property type="entry name" value="MnmA_TRMU-like"/>
    <property type="match status" value="1"/>
</dbReference>
<dbReference type="FunFam" id="2.30.30.280:FF:000001">
    <property type="entry name" value="tRNA-specific 2-thiouridylase MnmA"/>
    <property type="match status" value="1"/>
</dbReference>
<dbReference type="FunFam" id="2.40.30.10:FF:000023">
    <property type="entry name" value="tRNA-specific 2-thiouridylase MnmA"/>
    <property type="match status" value="1"/>
</dbReference>
<dbReference type="FunFam" id="3.40.50.620:FF:000004">
    <property type="entry name" value="tRNA-specific 2-thiouridylase MnmA"/>
    <property type="match status" value="1"/>
</dbReference>
<dbReference type="Gene3D" id="2.30.30.280">
    <property type="entry name" value="Adenine nucleotide alpha hydrolases-like domains"/>
    <property type="match status" value="1"/>
</dbReference>
<dbReference type="Gene3D" id="3.40.50.620">
    <property type="entry name" value="HUPs"/>
    <property type="match status" value="1"/>
</dbReference>
<dbReference type="Gene3D" id="2.40.30.10">
    <property type="entry name" value="Translation factors"/>
    <property type="match status" value="1"/>
</dbReference>
<dbReference type="HAMAP" id="MF_00144">
    <property type="entry name" value="tRNA_thiouridyl_MnmA"/>
    <property type="match status" value="1"/>
</dbReference>
<dbReference type="InterPro" id="IPR004506">
    <property type="entry name" value="MnmA-like"/>
</dbReference>
<dbReference type="InterPro" id="IPR046885">
    <property type="entry name" value="MnmA-like_C"/>
</dbReference>
<dbReference type="InterPro" id="IPR046884">
    <property type="entry name" value="MnmA-like_central"/>
</dbReference>
<dbReference type="InterPro" id="IPR023382">
    <property type="entry name" value="MnmA-like_central_sf"/>
</dbReference>
<dbReference type="InterPro" id="IPR014729">
    <property type="entry name" value="Rossmann-like_a/b/a_fold"/>
</dbReference>
<dbReference type="NCBIfam" id="NF001138">
    <property type="entry name" value="PRK00143.1"/>
    <property type="match status" value="1"/>
</dbReference>
<dbReference type="NCBIfam" id="TIGR00420">
    <property type="entry name" value="trmU"/>
    <property type="match status" value="1"/>
</dbReference>
<dbReference type="PANTHER" id="PTHR11933:SF5">
    <property type="entry name" value="MITOCHONDRIAL TRNA-SPECIFIC 2-THIOURIDYLASE 1"/>
    <property type="match status" value="1"/>
</dbReference>
<dbReference type="PANTHER" id="PTHR11933">
    <property type="entry name" value="TRNA 5-METHYLAMINOMETHYL-2-THIOURIDYLATE -METHYLTRANSFERASE"/>
    <property type="match status" value="1"/>
</dbReference>
<dbReference type="Pfam" id="PF03054">
    <property type="entry name" value="tRNA_Me_trans"/>
    <property type="match status" value="1"/>
</dbReference>
<dbReference type="Pfam" id="PF20258">
    <property type="entry name" value="tRNA_Me_trans_C"/>
    <property type="match status" value="1"/>
</dbReference>
<dbReference type="Pfam" id="PF20259">
    <property type="entry name" value="tRNA_Me_trans_M"/>
    <property type="match status" value="1"/>
</dbReference>
<dbReference type="SUPFAM" id="SSF52402">
    <property type="entry name" value="Adenine nucleotide alpha hydrolases-like"/>
    <property type="match status" value="1"/>
</dbReference>
<keyword id="KW-0067">ATP-binding</keyword>
<keyword id="KW-0963">Cytoplasm</keyword>
<keyword id="KW-1015">Disulfide bond</keyword>
<keyword id="KW-0547">Nucleotide-binding</keyword>
<keyword id="KW-0694">RNA-binding</keyword>
<keyword id="KW-0808">Transferase</keyword>
<keyword id="KW-0819">tRNA processing</keyword>
<keyword id="KW-0820">tRNA-binding</keyword>
<name>MNMA_STRPM</name>
<reference key="1">
    <citation type="journal article" date="2005" name="J. Infect. Dis.">
        <title>Genome sequence of a serotype M28 strain of group A Streptococcus: potential new insights into puerperal sepsis and bacterial disease specificity.</title>
        <authorList>
            <person name="Green N.M."/>
            <person name="Zhang S."/>
            <person name="Porcella S.F."/>
            <person name="Nagiec M.J."/>
            <person name="Barbian K.D."/>
            <person name="Beres S.B."/>
            <person name="Lefebvre R.B."/>
            <person name="Musser J.M."/>
        </authorList>
    </citation>
    <scope>NUCLEOTIDE SEQUENCE [LARGE SCALE GENOMIC DNA]</scope>
    <source>
        <strain>MGAS6180</strain>
    </source>
</reference>
<accession>Q48QM8</accession>
<feature type="chain" id="PRO_0000349814" description="tRNA-specific 2-thiouridylase MnmA">
    <location>
        <begin position="1"/>
        <end position="373"/>
    </location>
</feature>
<feature type="region of interest" description="Interaction with target base in tRNA" evidence="1">
    <location>
        <begin position="98"/>
        <end position="100"/>
    </location>
</feature>
<feature type="region of interest" description="Interaction with tRNA" evidence="1">
    <location>
        <begin position="150"/>
        <end position="152"/>
    </location>
</feature>
<feature type="region of interest" description="Interaction with tRNA" evidence="1">
    <location>
        <begin position="312"/>
        <end position="313"/>
    </location>
</feature>
<feature type="active site" description="Nucleophile" evidence="1">
    <location>
        <position position="103"/>
    </location>
</feature>
<feature type="active site" description="Cysteine persulfide intermediate" evidence="1">
    <location>
        <position position="200"/>
    </location>
</feature>
<feature type="binding site" evidence="1">
    <location>
        <begin position="12"/>
        <end position="19"/>
    </location>
    <ligand>
        <name>ATP</name>
        <dbReference type="ChEBI" id="CHEBI:30616"/>
    </ligand>
</feature>
<feature type="binding site" evidence="1">
    <location>
        <position position="38"/>
    </location>
    <ligand>
        <name>ATP</name>
        <dbReference type="ChEBI" id="CHEBI:30616"/>
    </ligand>
</feature>
<feature type="binding site" evidence="1">
    <location>
        <position position="127"/>
    </location>
    <ligand>
        <name>ATP</name>
        <dbReference type="ChEBI" id="CHEBI:30616"/>
    </ligand>
</feature>
<feature type="site" description="Interaction with tRNA" evidence="1">
    <location>
        <position position="128"/>
    </location>
</feature>
<feature type="site" description="Interaction with tRNA" evidence="1">
    <location>
        <position position="344"/>
    </location>
</feature>
<feature type="disulfide bond" description="Alternate" evidence="1">
    <location>
        <begin position="103"/>
        <end position="200"/>
    </location>
</feature>
<comment type="function">
    <text evidence="1">Catalyzes the 2-thiolation of uridine at the wobble position (U34) of tRNA, leading to the formation of s(2)U34.</text>
</comment>
<comment type="catalytic activity">
    <reaction evidence="1">
        <text>S-sulfanyl-L-cysteinyl-[protein] + uridine(34) in tRNA + AH2 + ATP = 2-thiouridine(34) in tRNA + L-cysteinyl-[protein] + A + AMP + diphosphate + H(+)</text>
        <dbReference type="Rhea" id="RHEA:47032"/>
        <dbReference type="Rhea" id="RHEA-COMP:10131"/>
        <dbReference type="Rhea" id="RHEA-COMP:11726"/>
        <dbReference type="Rhea" id="RHEA-COMP:11727"/>
        <dbReference type="Rhea" id="RHEA-COMP:11728"/>
        <dbReference type="ChEBI" id="CHEBI:13193"/>
        <dbReference type="ChEBI" id="CHEBI:15378"/>
        <dbReference type="ChEBI" id="CHEBI:17499"/>
        <dbReference type="ChEBI" id="CHEBI:29950"/>
        <dbReference type="ChEBI" id="CHEBI:30616"/>
        <dbReference type="ChEBI" id="CHEBI:33019"/>
        <dbReference type="ChEBI" id="CHEBI:61963"/>
        <dbReference type="ChEBI" id="CHEBI:65315"/>
        <dbReference type="ChEBI" id="CHEBI:87170"/>
        <dbReference type="ChEBI" id="CHEBI:456215"/>
        <dbReference type="EC" id="2.8.1.13"/>
    </reaction>
</comment>
<comment type="subcellular location">
    <subcellularLocation>
        <location evidence="1">Cytoplasm</location>
    </subcellularLocation>
</comment>
<comment type="similarity">
    <text evidence="1">Belongs to the MnmA/TRMU family.</text>
</comment>
<comment type="sequence caution" evidence="2">
    <conflict type="erroneous initiation">
        <sequence resource="EMBL-CDS" id="AAX72982"/>
    </conflict>
</comment>
<evidence type="ECO:0000255" key="1">
    <source>
        <dbReference type="HAMAP-Rule" id="MF_00144"/>
    </source>
</evidence>
<evidence type="ECO:0000305" key="2"/>
<organism>
    <name type="scientific">Streptococcus pyogenes serotype M28 (strain MGAS6180)</name>
    <dbReference type="NCBI Taxonomy" id="319701"/>
    <lineage>
        <taxon>Bacteria</taxon>
        <taxon>Bacillati</taxon>
        <taxon>Bacillota</taxon>
        <taxon>Bacilli</taxon>
        <taxon>Lactobacillales</taxon>
        <taxon>Streptococcaceae</taxon>
        <taxon>Streptococcus</taxon>
    </lineage>
</organism>
<proteinExistence type="inferred from homology"/>
<sequence>MTDNSKIRVVVGMSGGVDSSVTALLLKEQGYDVIGVFMKNWDDTDEFGVCTATEDYKDVAAVADQIGIPYYSVNFEKEYWDRVFEYFLAEYRAGRTPNPDVMCNKEIKFKAFLDYAMTLGADYVATGHYAQVKRDENGTVHMLRGADNGKDQTYFLSQLSQEQLQKTLFPLGHLQKSEVREIAERAGLATAKKKDSTGICFIGEKNFKQFLSQYLPAQKGRMMTIDGRDMGEHAGLMYYTIGQRGGLGIGGQHGGDNQPWFVVGKDLSQNILYVGQGFYHEALMSNSLDASVIHFTREMPEEFTFECTAKFRYRQPDSHVAVHVRGDKAEVVFAEPQRAITPGQAVVFYDGKECLGGGMIDMAYKNGQPCQYI</sequence>
<protein>
    <recommendedName>
        <fullName evidence="1">tRNA-specific 2-thiouridylase MnmA</fullName>
        <ecNumber evidence="1">2.8.1.13</ecNumber>
    </recommendedName>
</protein>
<gene>
    <name evidence="1" type="primary">mnmA</name>
    <name type="ordered locus">M28_Spy1872</name>
</gene>